<organism>
    <name type="scientific">Bos taurus</name>
    <name type="common">Bovine</name>
    <dbReference type="NCBI Taxonomy" id="9913"/>
    <lineage>
        <taxon>Eukaryota</taxon>
        <taxon>Metazoa</taxon>
        <taxon>Chordata</taxon>
        <taxon>Craniata</taxon>
        <taxon>Vertebrata</taxon>
        <taxon>Euteleostomi</taxon>
        <taxon>Mammalia</taxon>
        <taxon>Eutheria</taxon>
        <taxon>Laurasiatheria</taxon>
        <taxon>Artiodactyla</taxon>
        <taxon>Ruminantia</taxon>
        <taxon>Pecora</taxon>
        <taxon>Bovidae</taxon>
        <taxon>Bovinae</taxon>
        <taxon>Bos</taxon>
    </lineage>
</organism>
<accession>A3KN36</accession>
<reference key="1">
    <citation type="submission" date="2007-02" db="EMBL/GenBank/DDBJ databases">
        <authorList>
            <consortium name="NIH - Mammalian Gene Collection (MGC) project"/>
        </authorList>
    </citation>
    <scope>NUCLEOTIDE SEQUENCE [LARGE SCALE MRNA]</scope>
    <source>
        <strain>Hereford</strain>
        <tissue>Fetal muscle</tissue>
    </source>
</reference>
<sequence>MAVMPLKVWHQEVVTFEDVAVYFTRTEWAGLSPAQRALYRSVMLEIYRSLTSLGYPVPKPALISLLERGDLPVGLETQDNPPAQGTRDIYKNSRTHMDSELTPTWGISEERDLMMSHGPQKNVLNKSSFLETCELEQHQEIPTVKNIRGKVLRIHYDRKPFRCEECGKCFSYFSYYVRHQRIHTGEKPFECNECGKAFNGNSSLIRHQRIHTGEKPYQCEECGRAFNDNANLIRHQRIHSGDRPYLCRECGNGFTSSSEFIIHQRIHTGEKPYECNECGKAFVGNSPLLRHQKIHTGEKPYECNECGKSFGRTSHLSQHQRIHTGEKPYSCTICGQAFNFHTKLTRHQRVHSEVKPFDCICCGKVFSTQAQLKRHLRIHIQETSCDECGKVFTSKRNLLQHQRVHTRKKPREYVKYEKTFRTSSQLDCAHPGEKPVLDVGCFGLPEFFTPFYW</sequence>
<feature type="chain" id="PRO_0000367589" description="Zinc finger protein 19">
    <location>
        <begin position="1"/>
        <end position="453"/>
    </location>
</feature>
<feature type="domain" description="KRAB" evidence="3">
    <location>
        <begin position="14"/>
        <end position="85"/>
    </location>
</feature>
<feature type="zinc finger region" description="C2H2-type 1" evidence="2">
    <location>
        <begin position="161"/>
        <end position="183"/>
    </location>
</feature>
<feature type="zinc finger region" description="C2H2-type 2" evidence="2">
    <location>
        <begin position="189"/>
        <end position="211"/>
    </location>
</feature>
<feature type="zinc finger region" description="C2H2-type 3" evidence="2">
    <location>
        <begin position="217"/>
        <end position="239"/>
    </location>
</feature>
<feature type="zinc finger region" description="C2H2-type 4" evidence="2">
    <location>
        <begin position="245"/>
        <end position="267"/>
    </location>
</feature>
<feature type="zinc finger region" description="C2H2-type 5" evidence="2">
    <location>
        <begin position="273"/>
        <end position="295"/>
    </location>
</feature>
<feature type="zinc finger region" description="C2H2-type 6" evidence="2">
    <location>
        <begin position="301"/>
        <end position="323"/>
    </location>
</feature>
<feature type="zinc finger region" description="C2H2-type 7" evidence="2">
    <location>
        <begin position="329"/>
        <end position="351"/>
    </location>
</feature>
<feature type="zinc finger region" description="C2H2-type 8" evidence="2">
    <location>
        <begin position="357"/>
        <end position="379"/>
    </location>
</feature>
<feature type="zinc finger region" description="C2H2-type 9" evidence="2">
    <location>
        <begin position="383"/>
        <end position="405"/>
    </location>
</feature>
<gene>
    <name type="primary">ZNF19</name>
</gene>
<name>ZNF19_BOVIN</name>
<comment type="function">
    <text evidence="1">May be involved in transcriptional regulation.</text>
</comment>
<comment type="subcellular location">
    <subcellularLocation>
        <location evidence="1">Nucleus</location>
    </subcellularLocation>
</comment>
<comment type="similarity">
    <text evidence="4">Belongs to the krueppel C2H2-type zinc-finger protein family.</text>
</comment>
<keyword id="KW-0238">DNA-binding</keyword>
<keyword id="KW-0479">Metal-binding</keyword>
<keyword id="KW-0539">Nucleus</keyword>
<keyword id="KW-1185">Reference proteome</keyword>
<keyword id="KW-0677">Repeat</keyword>
<keyword id="KW-0804">Transcription</keyword>
<keyword id="KW-0805">Transcription regulation</keyword>
<keyword id="KW-0862">Zinc</keyword>
<keyword id="KW-0863">Zinc-finger</keyword>
<evidence type="ECO:0000250" key="1"/>
<evidence type="ECO:0000255" key="2">
    <source>
        <dbReference type="PROSITE-ProRule" id="PRU00042"/>
    </source>
</evidence>
<evidence type="ECO:0000255" key="3">
    <source>
        <dbReference type="PROSITE-ProRule" id="PRU00119"/>
    </source>
</evidence>
<evidence type="ECO:0000305" key="4"/>
<dbReference type="EMBL" id="BC133549">
    <property type="protein sequence ID" value="AAI33550.1"/>
    <property type="molecule type" value="mRNA"/>
</dbReference>
<dbReference type="RefSeq" id="NP_001076929.1">
    <property type="nucleotide sequence ID" value="NM_001083460.2"/>
</dbReference>
<dbReference type="SMR" id="A3KN36"/>
<dbReference type="STRING" id="9913.ENSBTAP00000058560"/>
<dbReference type="Ensembl" id="ENSBTAT00000103238.1">
    <property type="protein sequence ID" value="ENSBTAP00000081748.1"/>
    <property type="gene ID" value="ENSBTAG00000032018.5"/>
</dbReference>
<dbReference type="GeneID" id="532079"/>
<dbReference type="KEGG" id="bta:532079"/>
<dbReference type="CTD" id="7567"/>
<dbReference type="VEuPathDB" id="HostDB:ENSBTAG00000032018"/>
<dbReference type="VGNC" id="VGNC:111283">
    <property type="gene designation" value="ZNF19"/>
</dbReference>
<dbReference type="GeneTree" id="ENSGT00940000163278"/>
<dbReference type="HOGENOM" id="CLU_002678_57_1_1"/>
<dbReference type="InParanoid" id="A3KN36"/>
<dbReference type="OMA" id="MPLNAWH"/>
<dbReference type="OrthoDB" id="6077919at2759"/>
<dbReference type="Reactome" id="R-BTA-212436">
    <property type="pathway name" value="Generic Transcription Pathway"/>
</dbReference>
<dbReference type="Proteomes" id="UP000009136">
    <property type="component" value="Chromosome 18"/>
</dbReference>
<dbReference type="Bgee" id="ENSBTAG00000032018">
    <property type="expression patterns" value="Expressed in caput epididymis and 103 other cell types or tissues"/>
</dbReference>
<dbReference type="GO" id="GO:0005634">
    <property type="term" value="C:nucleus"/>
    <property type="evidence" value="ECO:0000318"/>
    <property type="project" value="GO_Central"/>
</dbReference>
<dbReference type="GO" id="GO:0000981">
    <property type="term" value="F:DNA-binding transcription factor activity, RNA polymerase II-specific"/>
    <property type="evidence" value="ECO:0000318"/>
    <property type="project" value="GO_Central"/>
</dbReference>
<dbReference type="GO" id="GO:0000977">
    <property type="term" value="F:RNA polymerase II transcription regulatory region sequence-specific DNA binding"/>
    <property type="evidence" value="ECO:0000318"/>
    <property type="project" value="GO_Central"/>
</dbReference>
<dbReference type="GO" id="GO:0008270">
    <property type="term" value="F:zinc ion binding"/>
    <property type="evidence" value="ECO:0007669"/>
    <property type="project" value="UniProtKB-KW"/>
</dbReference>
<dbReference type="GO" id="GO:0006357">
    <property type="term" value="P:regulation of transcription by RNA polymerase II"/>
    <property type="evidence" value="ECO:0000318"/>
    <property type="project" value="GO_Central"/>
</dbReference>
<dbReference type="CDD" id="cd07765">
    <property type="entry name" value="KRAB_A-box"/>
    <property type="match status" value="1"/>
</dbReference>
<dbReference type="FunFam" id="3.30.160.60:FF:004050">
    <property type="match status" value="1"/>
</dbReference>
<dbReference type="FunFam" id="3.30.160.60:FF:004935">
    <property type="match status" value="1"/>
</dbReference>
<dbReference type="FunFam" id="3.30.160.60:FF:001920">
    <property type="entry name" value="Zinc finger protein 19"/>
    <property type="match status" value="1"/>
</dbReference>
<dbReference type="FunFam" id="3.30.160.60:FF:002172">
    <property type="entry name" value="Zinc finger protein 19"/>
    <property type="match status" value="1"/>
</dbReference>
<dbReference type="FunFam" id="3.30.160.60:FF:003496">
    <property type="entry name" value="Zinc finger protein 19"/>
    <property type="match status" value="1"/>
</dbReference>
<dbReference type="FunFam" id="3.30.160.60:FF:000794">
    <property type="entry name" value="zinc finger protein 2 isoform X2"/>
    <property type="match status" value="2"/>
</dbReference>
<dbReference type="FunFam" id="3.30.160.60:FF:002402">
    <property type="entry name" value="Zinc finger protein 347"/>
    <property type="match status" value="1"/>
</dbReference>
<dbReference type="FunFam" id="3.30.160.60:FF:002004">
    <property type="entry name" value="Zinc finger protein 473"/>
    <property type="match status" value="1"/>
</dbReference>
<dbReference type="FunFam" id="3.30.160.60:FF:000737">
    <property type="entry name" value="Zinc finger protein 565"/>
    <property type="match status" value="1"/>
</dbReference>
<dbReference type="Gene3D" id="6.10.140.140">
    <property type="match status" value="1"/>
</dbReference>
<dbReference type="Gene3D" id="3.30.160.60">
    <property type="entry name" value="Classic Zinc Finger"/>
    <property type="match status" value="9"/>
</dbReference>
<dbReference type="InterPro" id="IPR001909">
    <property type="entry name" value="KRAB"/>
</dbReference>
<dbReference type="InterPro" id="IPR036051">
    <property type="entry name" value="KRAB_dom_sf"/>
</dbReference>
<dbReference type="InterPro" id="IPR036236">
    <property type="entry name" value="Znf_C2H2_sf"/>
</dbReference>
<dbReference type="InterPro" id="IPR013087">
    <property type="entry name" value="Znf_C2H2_type"/>
</dbReference>
<dbReference type="PANTHER" id="PTHR14003">
    <property type="entry name" value="TRANSCRIPTIONAL REPRESSOR PROTEIN YY"/>
    <property type="match status" value="1"/>
</dbReference>
<dbReference type="PANTHER" id="PTHR14003:SF23">
    <property type="entry name" value="ZINC FINGER PROTEIN 143"/>
    <property type="match status" value="1"/>
</dbReference>
<dbReference type="Pfam" id="PF01352">
    <property type="entry name" value="KRAB"/>
    <property type="match status" value="1"/>
</dbReference>
<dbReference type="Pfam" id="PF00096">
    <property type="entry name" value="zf-C2H2"/>
    <property type="match status" value="9"/>
</dbReference>
<dbReference type="SMART" id="SM00349">
    <property type="entry name" value="KRAB"/>
    <property type="match status" value="1"/>
</dbReference>
<dbReference type="SMART" id="SM00355">
    <property type="entry name" value="ZnF_C2H2"/>
    <property type="match status" value="9"/>
</dbReference>
<dbReference type="SUPFAM" id="SSF57667">
    <property type="entry name" value="beta-beta-alpha zinc fingers"/>
    <property type="match status" value="6"/>
</dbReference>
<dbReference type="SUPFAM" id="SSF109640">
    <property type="entry name" value="KRAB domain (Kruppel-associated box)"/>
    <property type="match status" value="1"/>
</dbReference>
<dbReference type="PROSITE" id="PS50805">
    <property type="entry name" value="KRAB"/>
    <property type="match status" value="1"/>
</dbReference>
<dbReference type="PROSITE" id="PS00028">
    <property type="entry name" value="ZINC_FINGER_C2H2_1"/>
    <property type="match status" value="9"/>
</dbReference>
<dbReference type="PROSITE" id="PS50157">
    <property type="entry name" value="ZINC_FINGER_C2H2_2"/>
    <property type="match status" value="9"/>
</dbReference>
<proteinExistence type="evidence at transcript level"/>
<protein>
    <recommendedName>
        <fullName>Zinc finger protein 19</fullName>
    </recommendedName>
</protein>